<comment type="function">
    <text evidence="2 7 8">Oxidoreductase; part of the gene cluster that mediates the biosynthesis of aflatoxins, a group of polyketide-derived furanocoumarins, and part of the most toxic and carcinogenic compounds among the known mycotoxins (PubMed:15006741, PubMed:15094053, PubMed:16461654). The four major aflatoxins produced by A.parasiticus are aflatoxin B1 (AFB1), aflatoxin B2 (AFB2), aflatoxin G1 (AFG1) and aflatoxin G2 (AFG2) (PubMed:15006741). Within the aflatoxin pathway, the oxidoreductase aflX seems to be involved in the conversion of versicolorin A (VERA) to demethylsterigmatocystin (DMST), through probable epoxide ring-opening step following versicolorin A oxidation required for the formation of the xanthone ring (PubMed:16461654). The biosynthesis of aflatoxins begins with the norsolorinic acid synthase aflC that combines a hexanoyl starter unit produced by the fatty acid synthase aflA/aflB and 7 malonyl-CoA extender units to synthesize the precursor NOR. The second step is the conversion of NOR to averantin and requires the norsolorinic acid ketoreductase aflD, which catalyzes the dehydration of norsolorinic acid to form (1'S)-averantin. The norsolorinic acid reductases aflE and aflF may also play a role in the conversion of NOR to AVN. The cytochrome P450 monooxygenase aflG then catalyzes the hydroxylation of AVN to 5'hydroxyaverantin (HAVN). The next step is performed by the 5'-hydroxyaverantin dehydrogenase aflH that transforms HAVN to 5'-oxoaverantin (OAVN) which is further converted to averufin (AVF) by aflK that plays a dual role in the pathway, as a 5'-oxoaverantin cyclase that mediates conversion of 5'-oxoaverantin, as well as a versicolorin B synthase in a later step in the pathway. The averufin oxidase aflI catalyzes the conversion of AVF to versiconal hemiacetal acetate (VHA). VHA is then the substrate for the versiconal hemiacetal acetate esterase aflJ to yield versiconal (VAL). Versicolorin B synthase aflK then converts VAL to versicolorin B (VERB) by closing the bisfuran ring of aflatoxin which is required for DNA-binding, thus giving to aflatoxin its activity as a mutagen. Then, the activity of the versicolorin B desaturase aflL leads to versicolorin A (VERA). A branch point starts from VERB since it can also be converted to dihydrodemethylsterigmatocystin (DMDHST), probably also by aflL, VERA being a precursor for aflatoxins B1 and G1, and DMDHST for aflatoxins B2 and G2. Next, the versicolorin reductase aflM and the cytochrome P450 monooxygenase aflN are involved in conversion of VERA to demethylsterigmatocystin (DMST). AflX and aflY seem also involved in this step, through probable aflX-mediated epoxide ring-opening step following versicolorin A oxidation and aflY-mediated Baeyer-Villiger oxidation required for the formation of the xanthone ring. The methyltransferase aflO then leads to the modification of DMST to sterigmatocystin (ST), and of DMDHST to dihydrosterigmatocystin (DHST). Both ST and DHST are then substrates of the O-methyltransferase aflP to yield O-methylsterigmatocystin (OMST) and dihydro-O-methylsterigmatocystin (DHOMST), respectively. Finally OMST is converted to aflatoxins B1 and G1, and DHOMST to aflatoxins B2 and G2, via the action of several enzymes including O-methylsterigmatocystin oxidoreductase aflQ, the cytochrome P450 monooxygenase aflU, but also the NADH-dependent flavin oxidoreductase nadA which is specifically required for the synthesis of AFG1 (PubMed:15006741).</text>
</comment>
<comment type="pathway">
    <text evidence="1 7">Mycotoxin biosynthesis; aflatoxin biosynthesis.</text>
</comment>
<comment type="similarity">
    <text evidence="6">Belongs to the avfA family.</text>
</comment>
<gene>
    <name evidence="3" type="primary">aflX</name>
    <name evidence="4" type="synonym">ordB</name>
    <name type="ORF">P875_00053036</name>
</gene>
<keyword id="KW-0503">Monooxygenase</keyword>
<keyword id="KW-0560">Oxidoreductase</keyword>
<keyword id="KW-1185">Reference proteome</keyword>
<accession>Q6UEF2</accession>
<accession>A0A0F0I453</accession>
<name>AFLX_ASPPU</name>
<protein>
    <recommendedName>
        <fullName evidence="5">Oxidoreductase aflX</fullName>
        <ecNumber evidence="9">1.-.-.-</ecNumber>
    </recommendedName>
    <alternativeName>
        <fullName evidence="3">Aflatoxin biosynthesis protein X</fullName>
    </alternativeName>
</protein>
<organism>
    <name type="scientific">Aspergillus parasiticus (strain ATCC 56775 / NRRL 5862 / SRRC 143 / SU-1)</name>
    <dbReference type="NCBI Taxonomy" id="1403190"/>
    <lineage>
        <taxon>Eukaryota</taxon>
        <taxon>Fungi</taxon>
        <taxon>Dikarya</taxon>
        <taxon>Ascomycota</taxon>
        <taxon>Pezizomycotina</taxon>
        <taxon>Eurotiomycetes</taxon>
        <taxon>Eurotiomycetidae</taxon>
        <taxon>Eurotiales</taxon>
        <taxon>Aspergillaceae</taxon>
        <taxon>Aspergillus</taxon>
        <taxon>Aspergillus subgen. Circumdati</taxon>
    </lineage>
</organism>
<dbReference type="EC" id="1.-.-.-" evidence="9"/>
<dbReference type="EMBL" id="AY371490">
    <property type="protein sequence ID" value="AAS66024.1"/>
    <property type="molecule type" value="Genomic_DNA"/>
</dbReference>
<dbReference type="EMBL" id="JZEE01000729">
    <property type="protein sequence ID" value="KJK60763.1"/>
    <property type="molecule type" value="Genomic_DNA"/>
</dbReference>
<dbReference type="SMR" id="Q6UEF2"/>
<dbReference type="STRING" id="1403190.Q6UEF2"/>
<dbReference type="OrthoDB" id="10254221at2759"/>
<dbReference type="UniPathway" id="UPA00287"/>
<dbReference type="Proteomes" id="UP000033540">
    <property type="component" value="Unassembled WGS sequence"/>
</dbReference>
<dbReference type="GO" id="GO:0004497">
    <property type="term" value="F:monooxygenase activity"/>
    <property type="evidence" value="ECO:0000314"/>
    <property type="project" value="UniProtKB"/>
</dbReference>
<dbReference type="GO" id="GO:0016491">
    <property type="term" value="F:oxidoreductase activity"/>
    <property type="evidence" value="ECO:0000315"/>
    <property type="project" value="UniProt"/>
</dbReference>
<dbReference type="GO" id="GO:0045122">
    <property type="term" value="P:aflatoxin biosynthetic process"/>
    <property type="evidence" value="ECO:0000314"/>
    <property type="project" value="UniProtKB"/>
</dbReference>
<dbReference type="FunFam" id="3.40.50.720:FF:000680">
    <property type="entry name" value="AflX/ ordB/ monooxygenase/ oxidase"/>
    <property type="match status" value="1"/>
</dbReference>
<dbReference type="Gene3D" id="3.40.50.720">
    <property type="entry name" value="NAD(P)-binding Rossmann-like Domain"/>
    <property type="match status" value="1"/>
</dbReference>
<dbReference type="InterPro" id="IPR016040">
    <property type="entry name" value="NAD(P)-bd_dom"/>
</dbReference>
<dbReference type="InterPro" id="IPR036291">
    <property type="entry name" value="NAD(P)-bd_dom_sf"/>
</dbReference>
<dbReference type="PANTHER" id="PTHR15020">
    <property type="entry name" value="FLAVIN REDUCTASE-RELATED"/>
    <property type="match status" value="1"/>
</dbReference>
<dbReference type="PANTHER" id="PTHR15020:SF50">
    <property type="entry name" value="UPF0659 PROTEIN YMR090W"/>
    <property type="match status" value="1"/>
</dbReference>
<dbReference type="Pfam" id="PF13460">
    <property type="entry name" value="NAD_binding_10"/>
    <property type="match status" value="1"/>
</dbReference>
<dbReference type="SUPFAM" id="SSF51735">
    <property type="entry name" value="NAD(P)-binding Rossmann-fold domains"/>
    <property type="match status" value="1"/>
</dbReference>
<feature type="chain" id="PRO_0000424168" description="Oxidoreductase aflX">
    <location>
        <begin position="1"/>
        <end position="266"/>
    </location>
</feature>
<sequence length="266" mass="29374">MRRYAILGATGNTGQALLNVLLQSPDNQIHAYCRSASKLNRLRPEISQHRQVKVWEGSLEDVSLLSECIRGTRAVFMVVAIPDNMPHCTIAQDCTNAVLNTLKKLQAEGCQSLPKLIVLSSASLEDSLCADVPPLIHRVLNIAAGNLYSDLAKAEKILRAEKHWVSTTFVKPGGLVHDVQRGHTLSTKTAKTPVSFLDVAAGMVEIADMDDKTYDMMNVSVNAIGDGTAFPWKGVYYVLTGLLFHFFPWTYKYFGDSPMPKPRKDL</sequence>
<reference key="1">
    <citation type="journal article" date="2004" name="FEBS Lett.">
        <title>Completed sequence of aflatoxin pathway gene cluster in Aspergillus parasiticus.</title>
        <authorList>
            <person name="Yu J."/>
            <person name="Bhatnagar D."/>
            <person name="Cleveland T.E."/>
        </authorList>
    </citation>
    <scope>NUCLEOTIDE SEQUENCE [GENOMIC DNA]</scope>
    <scope>FUNCTION</scope>
    <scope>PATHWAY</scope>
    <source>
        <strain>ATCC 56775 / NRRL 5862 / SRRC 143 / SU-1</strain>
    </source>
</reference>
<reference key="2">
    <citation type="submission" date="2015-02" db="EMBL/GenBank/DDBJ databases">
        <title>Draft genome sequence of Aspergillus parasiticus SU-1.</title>
        <authorList>
            <person name="Yu J."/>
            <person name="Fedorova N."/>
            <person name="Yin Y."/>
            <person name="Losada L."/>
            <person name="Zafar N."/>
            <person name="Taujale R."/>
            <person name="Ehrlich K.C."/>
            <person name="Bhatnagar D."/>
            <person name="Cleveland T.E."/>
            <person name="Bennett J.W."/>
            <person name="Nierman W.C."/>
        </authorList>
    </citation>
    <scope>NUCLEOTIDE SEQUENCE [LARGE SCALE GENOMIC DNA]</scope>
    <source>
        <strain>ATCC 56775 / NRRL 5862 / SRRC 143 / SU-1</strain>
    </source>
</reference>
<reference key="3">
    <citation type="journal article" date="2004" name="Appl. Environ. Microbiol.">
        <title>Clustered pathway genes in aflatoxin biosynthesis.</title>
        <authorList>
            <person name="Yu J."/>
            <person name="Chang P.K."/>
            <person name="Ehrlich K.C."/>
            <person name="Cary J.W."/>
            <person name="Bhatnagar D."/>
            <person name="Cleveland T.E."/>
            <person name="Payne G.A."/>
            <person name="Linz J.E."/>
            <person name="Woloshuk C.P."/>
            <person name="Bennett J.W."/>
        </authorList>
    </citation>
    <scope>FUNCTION</scope>
    <scope>PATHWAY</scope>
    <scope>NOMENCLATURE</scope>
</reference>
<reference key="4">
    <citation type="journal article" date="2006" name="Appl. Environ. Microbiol.">
        <title>The aflatoxin biosynthesis cluster gene, aflX, encodes an oxidoreductase involved in conversion of versicolorin A to demethylsterigmatocystin.</title>
        <authorList>
            <person name="Cary J.W."/>
            <person name="Ehrlich K.C."/>
            <person name="Bland J.M."/>
            <person name="Montalbano B.G."/>
        </authorList>
    </citation>
    <scope>FUNCTION</scope>
    <source>
        <strain>ATCC 56775 / NRRL 5862 / SRRC 143 / SU-1</strain>
    </source>
</reference>
<proteinExistence type="inferred from homology"/>
<evidence type="ECO:0000269" key="1">
    <source>
    </source>
</evidence>
<evidence type="ECO:0000269" key="2">
    <source>
    </source>
</evidence>
<evidence type="ECO:0000303" key="3">
    <source>
    </source>
</evidence>
<evidence type="ECO:0000303" key="4">
    <source>
    </source>
</evidence>
<evidence type="ECO:0000303" key="5">
    <source>
    </source>
</evidence>
<evidence type="ECO:0000305" key="6"/>
<evidence type="ECO:0000305" key="7">
    <source>
    </source>
</evidence>
<evidence type="ECO:0000305" key="8">
    <source>
    </source>
</evidence>
<evidence type="ECO:0000305" key="9">
    <source>
    </source>
</evidence>